<organism>
    <name type="scientific">Escherichia coli O7:K1 (strain IAI39 / ExPEC)</name>
    <dbReference type="NCBI Taxonomy" id="585057"/>
    <lineage>
        <taxon>Bacteria</taxon>
        <taxon>Pseudomonadati</taxon>
        <taxon>Pseudomonadota</taxon>
        <taxon>Gammaproteobacteria</taxon>
        <taxon>Enterobacterales</taxon>
        <taxon>Enterobacteriaceae</taxon>
        <taxon>Escherichia</taxon>
    </lineage>
</organism>
<reference key="1">
    <citation type="journal article" date="2009" name="PLoS Genet.">
        <title>Organised genome dynamics in the Escherichia coli species results in highly diverse adaptive paths.</title>
        <authorList>
            <person name="Touchon M."/>
            <person name="Hoede C."/>
            <person name="Tenaillon O."/>
            <person name="Barbe V."/>
            <person name="Baeriswyl S."/>
            <person name="Bidet P."/>
            <person name="Bingen E."/>
            <person name="Bonacorsi S."/>
            <person name="Bouchier C."/>
            <person name="Bouvet O."/>
            <person name="Calteau A."/>
            <person name="Chiapello H."/>
            <person name="Clermont O."/>
            <person name="Cruveiller S."/>
            <person name="Danchin A."/>
            <person name="Diard M."/>
            <person name="Dossat C."/>
            <person name="Karoui M.E."/>
            <person name="Frapy E."/>
            <person name="Garry L."/>
            <person name="Ghigo J.M."/>
            <person name="Gilles A.M."/>
            <person name="Johnson J."/>
            <person name="Le Bouguenec C."/>
            <person name="Lescat M."/>
            <person name="Mangenot S."/>
            <person name="Martinez-Jehanne V."/>
            <person name="Matic I."/>
            <person name="Nassif X."/>
            <person name="Oztas S."/>
            <person name="Petit M.A."/>
            <person name="Pichon C."/>
            <person name="Rouy Z."/>
            <person name="Ruf C.S."/>
            <person name="Schneider D."/>
            <person name="Tourret J."/>
            <person name="Vacherie B."/>
            <person name="Vallenet D."/>
            <person name="Medigue C."/>
            <person name="Rocha E.P.C."/>
            <person name="Denamur E."/>
        </authorList>
    </citation>
    <scope>NUCLEOTIDE SEQUENCE [LARGE SCALE GENOMIC DNA]</scope>
    <source>
        <strain>IAI39 / ExPEC</strain>
    </source>
</reference>
<evidence type="ECO:0000255" key="1">
    <source>
        <dbReference type="HAMAP-Rule" id="MF_01637"/>
    </source>
</evidence>
<dbReference type="EMBL" id="CU928164">
    <property type="protein sequence ID" value="CAR20007.1"/>
    <property type="molecule type" value="Genomic_DNA"/>
</dbReference>
<dbReference type="RefSeq" id="WP_000619390.1">
    <property type="nucleotide sequence ID" value="NC_011750.1"/>
</dbReference>
<dbReference type="RefSeq" id="YP_002409788.1">
    <property type="nucleotide sequence ID" value="NC_011750.1"/>
</dbReference>
<dbReference type="SMR" id="B7NMH9"/>
<dbReference type="STRING" id="585057.ECIAI39_3895"/>
<dbReference type="KEGG" id="ect:ECIAI39_3895"/>
<dbReference type="PATRIC" id="fig|585057.6.peg.4033"/>
<dbReference type="HOGENOM" id="CLU_094569_0_0_6"/>
<dbReference type="Proteomes" id="UP000000749">
    <property type="component" value="Chromosome"/>
</dbReference>
<dbReference type="GO" id="GO:0051539">
    <property type="term" value="F:4 iron, 4 sulfur cluster binding"/>
    <property type="evidence" value="ECO:0007669"/>
    <property type="project" value="UniProtKB-UniRule"/>
</dbReference>
<dbReference type="GO" id="GO:0005506">
    <property type="term" value="F:iron ion binding"/>
    <property type="evidence" value="ECO:0007669"/>
    <property type="project" value="InterPro"/>
</dbReference>
<dbReference type="GO" id="GO:0016226">
    <property type="term" value="P:iron-sulfur cluster assembly"/>
    <property type="evidence" value="ECO:0007669"/>
    <property type="project" value="UniProtKB-UniRule"/>
</dbReference>
<dbReference type="GO" id="GO:0051604">
    <property type="term" value="P:protein maturation"/>
    <property type="evidence" value="ECO:0007669"/>
    <property type="project" value="UniProtKB-UniRule"/>
</dbReference>
<dbReference type="FunFam" id="2.60.300.12:FF:000004">
    <property type="entry name" value="Fe/S biogenesis protein NfuA"/>
    <property type="match status" value="1"/>
</dbReference>
<dbReference type="FunFam" id="3.30.300.130:FF:000002">
    <property type="entry name" value="Fe/S biogenesis protein NfuA"/>
    <property type="match status" value="1"/>
</dbReference>
<dbReference type="Gene3D" id="3.30.300.130">
    <property type="entry name" value="Fe-S cluster assembly (FSCA)"/>
    <property type="match status" value="1"/>
</dbReference>
<dbReference type="Gene3D" id="2.60.300.12">
    <property type="entry name" value="HesB-like domain"/>
    <property type="match status" value="1"/>
</dbReference>
<dbReference type="HAMAP" id="MF_01637">
    <property type="entry name" value="Fe_S_biogen_NfuA"/>
    <property type="match status" value="1"/>
</dbReference>
<dbReference type="InterPro" id="IPR017726">
    <property type="entry name" value="Fe/S_biogenesis_protein_NfuA"/>
</dbReference>
<dbReference type="InterPro" id="IPR000361">
    <property type="entry name" value="FeS_biogenesis"/>
</dbReference>
<dbReference type="InterPro" id="IPR034904">
    <property type="entry name" value="FSCA_dom_sf"/>
</dbReference>
<dbReference type="InterPro" id="IPR035903">
    <property type="entry name" value="HesB-like_dom_sf"/>
</dbReference>
<dbReference type="InterPro" id="IPR001075">
    <property type="entry name" value="NIF_FeS_clus_asmbl_NifU_C"/>
</dbReference>
<dbReference type="NCBIfam" id="NF008392">
    <property type="entry name" value="PRK11190.1"/>
    <property type="match status" value="1"/>
</dbReference>
<dbReference type="NCBIfam" id="TIGR03341">
    <property type="entry name" value="YhgI_GntY"/>
    <property type="match status" value="1"/>
</dbReference>
<dbReference type="PANTHER" id="PTHR11178:SF51">
    <property type="entry name" value="FE_S BIOGENESIS PROTEIN NFUA"/>
    <property type="match status" value="1"/>
</dbReference>
<dbReference type="PANTHER" id="PTHR11178">
    <property type="entry name" value="IRON-SULFUR CLUSTER SCAFFOLD PROTEIN NFU-RELATED"/>
    <property type="match status" value="1"/>
</dbReference>
<dbReference type="Pfam" id="PF01521">
    <property type="entry name" value="Fe-S_biosyn"/>
    <property type="match status" value="1"/>
</dbReference>
<dbReference type="Pfam" id="PF01106">
    <property type="entry name" value="NifU"/>
    <property type="match status" value="1"/>
</dbReference>
<dbReference type="SUPFAM" id="SSF117916">
    <property type="entry name" value="Fe-S cluster assembly (FSCA) domain-like"/>
    <property type="match status" value="1"/>
</dbReference>
<dbReference type="SUPFAM" id="SSF89360">
    <property type="entry name" value="HesB-like domain"/>
    <property type="match status" value="1"/>
</dbReference>
<accession>B7NMH9</accession>
<protein>
    <recommendedName>
        <fullName evidence="1">Fe/S biogenesis protein NfuA</fullName>
    </recommendedName>
</protein>
<name>NFUA_ECO7I</name>
<keyword id="KW-0004">4Fe-4S</keyword>
<keyword id="KW-0408">Iron</keyword>
<keyword id="KW-0411">Iron-sulfur</keyword>
<keyword id="KW-0479">Metal-binding</keyword>
<gene>
    <name evidence="1" type="primary">nfuA</name>
    <name type="ordered locus">ECIAI39_3895</name>
</gene>
<comment type="function">
    <text evidence="1">Involved in iron-sulfur cluster biogenesis. Binds a 4Fe-4S cluster, can transfer this cluster to apoproteins, and thereby intervenes in the maturation of Fe/S proteins. Could also act as a scaffold/chaperone for damaged Fe/S proteins.</text>
</comment>
<comment type="cofactor">
    <cofactor evidence="1">
        <name>[4Fe-4S] cluster</name>
        <dbReference type="ChEBI" id="CHEBI:49883"/>
    </cofactor>
    <text evidence="1">Binds 1 [4Fe-4S] cluster per subunit. The cluster is presumably bound at the interface of two monomers.</text>
</comment>
<comment type="subunit">
    <text evidence="1">Homodimer.</text>
</comment>
<comment type="similarity">
    <text evidence="1">Belongs to the NfuA family.</text>
</comment>
<feature type="chain" id="PRO_1000186746" description="Fe/S biogenesis protein NfuA">
    <location>
        <begin position="1"/>
        <end position="191"/>
    </location>
</feature>
<feature type="binding site" evidence="1">
    <location>
        <position position="149"/>
    </location>
    <ligand>
        <name>[4Fe-4S] cluster</name>
        <dbReference type="ChEBI" id="CHEBI:49883"/>
    </ligand>
</feature>
<feature type="binding site" evidence="1">
    <location>
        <position position="152"/>
    </location>
    <ligand>
        <name>[4Fe-4S] cluster</name>
        <dbReference type="ChEBI" id="CHEBI:49883"/>
    </ligand>
</feature>
<proteinExistence type="inferred from homology"/>
<sequence length="191" mass="21028">MIRISDAAQAHFAKLLANQEEGTQIRVFVINPGTPNAECGVSYCPPDAVEATDTALKFDLLTAYVDELSAPYLEDAEIDFVTDQLGSQLTLKAPNAKMRKVADDAPLMERVEYMLQSQINPQLAGHGGRVSLMEITEDGYAILQFGGGCNSCSMVDVTLKEGIEKQLLNEFPELKGVRDLTEHQRGEHSYY</sequence>